<organism>
    <name type="scientific">Shewanella halifaxensis (strain HAW-EB4)</name>
    <dbReference type="NCBI Taxonomy" id="458817"/>
    <lineage>
        <taxon>Bacteria</taxon>
        <taxon>Pseudomonadati</taxon>
        <taxon>Pseudomonadota</taxon>
        <taxon>Gammaproteobacteria</taxon>
        <taxon>Alteromonadales</taxon>
        <taxon>Shewanellaceae</taxon>
        <taxon>Shewanella</taxon>
    </lineage>
</organism>
<reference key="1">
    <citation type="submission" date="2008-01" db="EMBL/GenBank/DDBJ databases">
        <title>Complete sequence of Shewanella halifaxensis HAW-EB4.</title>
        <authorList>
            <consortium name="US DOE Joint Genome Institute"/>
            <person name="Copeland A."/>
            <person name="Lucas S."/>
            <person name="Lapidus A."/>
            <person name="Glavina del Rio T."/>
            <person name="Dalin E."/>
            <person name="Tice H."/>
            <person name="Bruce D."/>
            <person name="Goodwin L."/>
            <person name="Pitluck S."/>
            <person name="Sims D."/>
            <person name="Brettin T."/>
            <person name="Detter J.C."/>
            <person name="Han C."/>
            <person name="Kuske C.R."/>
            <person name="Schmutz J."/>
            <person name="Larimer F."/>
            <person name="Land M."/>
            <person name="Hauser L."/>
            <person name="Kyrpides N."/>
            <person name="Kim E."/>
            <person name="Zhao J.-S."/>
            <person name="Richardson P."/>
        </authorList>
    </citation>
    <scope>NUCLEOTIDE SEQUENCE [LARGE SCALE GENOMIC DNA]</scope>
    <source>
        <strain>HAW-EB4</strain>
    </source>
</reference>
<sequence length="159" mass="16893">MKIRIGHGFDVHKFGGEPPLILGGVDVPYEVGLIAHSDGDVALHAISDAILGAMALGDIGKHFPDTDPEFKGADSRVLLRHCYQLATDMGFSLSNLDVTIIAQAPKMAPHIEAIRKVLAADLVADINDINVKATTTEKLGFTGRKEGIAVEAVVLMIKA</sequence>
<accession>B0TK07</accession>
<name>ISPF_SHEHH</name>
<comment type="function">
    <text evidence="1">Involved in the biosynthesis of isopentenyl diphosphate (IPP) and dimethylallyl diphosphate (DMAPP), two major building blocks of isoprenoid compounds. Catalyzes the conversion of 4-diphosphocytidyl-2-C-methyl-D-erythritol 2-phosphate (CDP-ME2P) to 2-C-methyl-D-erythritol 2,4-cyclodiphosphate (ME-CPP) with a corresponding release of cytidine 5-monophosphate (CMP).</text>
</comment>
<comment type="catalytic activity">
    <reaction evidence="1">
        <text>4-CDP-2-C-methyl-D-erythritol 2-phosphate = 2-C-methyl-D-erythritol 2,4-cyclic diphosphate + CMP</text>
        <dbReference type="Rhea" id="RHEA:23864"/>
        <dbReference type="ChEBI" id="CHEBI:57919"/>
        <dbReference type="ChEBI" id="CHEBI:58483"/>
        <dbReference type="ChEBI" id="CHEBI:60377"/>
        <dbReference type="EC" id="4.6.1.12"/>
    </reaction>
</comment>
<comment type="cofactor">
    <cofactor evidence="1">
        <name>a divalent metal cation</name>
        <dbReference type="ChEBI" id="CHEBI:60240"/>
    </cofactor>
    <text evidence="1">Binds 1 divalent metal cation per subunit.</text>
</comment>
<comment type="pathway">
    <text evidence="1">Isoprenoid biosynthesis; isopentenyl diphosphate biosynthesis via DXP pathway; isopentenyl diphosphate from 1-deoxy-D-xylulose 5-phosphate: step 4/6.</text>
</comment>
<comment type="subunit">
    <text evidence="1">Homotrimer.</text>
</comment>
<comment type="similarity">
    <text evidence="1">Belongs to the IspF family.</text>
</comment>
<gene>
    <name evidence="1" type="primary">ispF</name>
    <name type="ordered locus">Shal_1225</name>
</gene>
<feature type="chain" id="PRO_1000075922" description="2-C-methyl-D-erythritol 2,4-cyclodiphosphate synthase">
    <location>
        <begin position="1"/>
        <end position="159"/>
    </location>
</feature>
<feature type="binding site" evidence="1">
    <location>
        <begin position="10"/>
        <end position="12"/>
    </location>
    <ligand>
        <name>4-CDP-2-C-methyl-D-erythritol 2-phosphate</name>
        <dbReference type="ChEBI" id="CHEBI:57919"/>
    </ligand>
</feature>
<feature type="binding site" evidence="1">
    <location>
        <position position="10"/>
    </location>
    <ligand>
        <name>a divalent metal cation</name>
        <dbReference type="ChEBI" id="CHEBI:60240"/>
    </ligand>
</feature>
<feature type="binding site" evidence="1">
    <location>
        <position position="12"/>
    </location>
    <ligand>
        <name>a divalent metal cation</name>
        <dbReference type="ChEBI" id="CHEBI:60240"/>
    </ligand>
</feature>
<feature type="binding site" evidence="1">
    <location>
        <begin position="36"/>
        <end position="37"/>
    </location>
    <ligand>
        <name>4-CDP-2-C-methyl-D-erythritol 2-phosphate</name>
        <dbReference type="ChEBI" id="CHEBI:57919"/>
    </ligand>
</feature>
<feature type="binding site" evidence="1">
    <location>
        <position position="44"/>
    </location>
    <ligand>
        <name>a divalent metal cation</name>
        <dbReference type="ChEBI" id="CHEBI:60240"/>
    </ligand>
</feature>
<feature type="binding site" evidence="1">
    <location>
        <begin position="58"/>
        <end position="60"/>
    </location>
    <ligand>
        <name>4-CDP-2-C-methyl-D-erythritol 2-phosphate</name>
        <dbReference type="ChEBI" id="CHEBI:57919"/>
    </ligand>
</feature>
<feature type="binding site" evidence="1">
    <location>
        <begin position="63"/>
        <end position="67"/>
    </location>
    <ligand>
        <name>4-CDP-2-C-methyl-D-erythritol 2-phosphate</name>
        <dbReference type="ChEBI" id="CHEBI:57919"/>
    </ligand>
</feature>
<feature type="binding site" evidence="1">
    <location>
        <begin position="102"/>
        <end position="108"/>
    </location>
    <ligand>
        <name>4-CDP-2-C-methyl-D-erythritol 2-phosphate</name>
        <dbReference type="ChEBI" id="CHEBI:57919"/>
    </ligand>
</feature>
<feature type="binding site" evidence="1">
    <location>
        <begin position="134"/>
        <end position="137"/>
    </location>
    <ligand>
        <name>4-CDP-2-C-methyl-D-erythritol 2-phosphate</name>
        <dbReference type="ChEBI" id="CHEBI:57919"/>
    </ligand>
</feature>
<feature type="binding site" evidence="1">
    <location>
        <position position="141"/>
    </location>
    <ligand>
        <name>4-CDP-2-C-methyl-D-erythritol 2-phosphate</name>
        <dbReference type="ChEBI" id="CHEBI:57919"/>
    </ligand>
</feature>
<feature type="binding site" evidence="1">
    <location>
        <position position="144"/>
    </location>
    <ligand>
        <name>4-CDP-2-C-methyl-D-erythritol 2-phosphate</name>
        <dbReference type="ChEBI" id="CHEBI:57919"/>
    </ligand>
</feature>
<feature type="site" description="Transition state stabilizer" evidence="1">
    <location>
        <position position="36"/>
    </location>
</feature>
<feature type="site" description="Transition state stabilizer" evidence="1">
    <location>
        <position position="135"/>
    </location>
</feature>
<evidence type="ECO:0000255" key="1">
    <source>
        <dbReference type="HAMAP-Rule" id="MF_00107"/>
    </source>
</evidence>
<dbReference type="EC" id="4.6.1.12" evidence="1"/>
<dbReference type="EMBL" id="CP000931">
    <property type="protein sequence ID" value="ABZ75794.1"/>
    <property type="molecule type" value="Genomic_DNA"/>
</dbReference>
<dbReference type="RefSeq" id="WP_012276336.1">
    <property type="nucleotide sequence ID" value="NC_010334.1"/>
</dbReference>
<dbReference type="SMR" id="B0TK07"/>
<dbReference type="STRING" id="458817.Shal_1225"/>
<dbReference type="KEGG" id="shl:Shal_1225"/>
<dbReference type="eggNOG" id="COG0245">
    <property type="taxonomic scope" value="Bacteria"/>
</dbReference>
<dbReference type="HOGENOM" id="CLU_084630_2_0_6"/>
<dbReference type="OrthoDB" id="9804336at2"/>
<dbReference type="UniPathway" id="UPA00056">
    <property type="reaction ID" value="UER00095"/>
</dbReference>
<dbReference type="Proteomes" id="UP000001317">
    <property type="component" value="Chromosome"/>
</dbReference>
<dbReference type="GO" id="GO:0008685">
    <property type="term" value="F:2-C-methyl-D-erythritol 2,4-cyclodiphosphate synthase activity"/>
    <property type="evidence" value="ECO:0007669"/>
    <property type="project" value="UniProtKB-UniRule"/>
</dbReference>
<dbReference type="GO" id="GO:0046872">
    <property type="term" value="F:metal ion binding"/>
    <property type="evidence" value="ECO:0007669"/>
    <property type="project" value="UniProtKB-KW"/>
</dbReference>
<dbReference type="GO" id="GO:0019288">
    <property type="term" value="P:isopentenyl diphosphate biosynthetic process, methylerythritol 4-phosphate pathway"/>
    <property type="evidence" value="ECO:0007669"/>
    <property type="project" value="UniProtKB-UniRule"/>
</dbReference>
<dbReference type="GO" id="GO:0016114">
    <property type="term" value="P:terpenoid biosynthetic process"/>
    <property type="evidence" value="ECO:0007669"/>
    <property type="project" value="InterPro"/>
</dbReference>
<dbReference type="CDD" id="cd00554">
    <property type="entry name" value="MECDP_synthase"/>
    <property type="match status" value="1"/>
</dbReference>
<dbReference type="FunFam" id="3.30.1330.50:FF:000001">
    <property type="entry name" value="2-C-methyl-D-erythritol 2,4-cyclodiphosphate synthase"/>
    <property type="match status" value="1"/>
</dbReference>
<dbReference type="Gene3D" id="3.30.1330.50">
    <property type="entry name" value="2-C-methyl-D-erythritol 2,4-cyclodiphosphate synthase"/>
    <property type="match status" value="1"/>
</dbReference>
<dbReference type="HAMAP" id="MF_00107">
    <property type="entry name" value="IspF"/>
    <property type="match status" value="1"/>
</dbReference>
<dbReference type="InterPro" id="IPR003526">
    <property type="entry name" value="MECDP_synthase"/>
</dbReference>
<dbReference type="InterPro" id="IPR020555">
    <property type="entry name" value="MECDP_synthase_CS"/>
</dbReference>
<dbReference type="InterPro" id="IPR036571">
    <property type="entry name" value="MECDP_synthase_sf"/>
</dbReference>
<dbReference type="NCBIfam" id="TIGR00151">
    <property type="entry name" value="ispF"/>
    <property type="match status" value="1"/>
</dbReference>
<dbReference type="PANTHER" id="PTHR43181">
    <property type="entry name" value="2-C-METHYL-D-ERYTHRITOL 2,4-CYCLODIPHOSPHATE SYNTHASE, CHLOROPLASTIC"/>
    <property type="match status" value="1"/>
</dbReference>
<dbReference type="PANTHER" id="PTHR43181:SF1">
    <property type="entry name" value="2-C-METHYL-D-ERYTHRITOL 2,4-CYCLODIPHOSPHATE SYNTHASE, CHLOROPLASTIC"/>
    <property type="match status" value="1"/>
</dbReference>
<dbReference type="Pfam" id="PF02542">
    <property type="entry name" value="YgbB"/>
    <property type="match status" value="1"/>
</dbReference>
<dbReference type="SUPFAM" id="SSF69765">
    <property type="entry name" value="IpsF-like"/>
    <property type="match status" value="1"/>
</dbReference>
<dbReference type="PROSITE" id="PS01350">
    <property type="entry name" value="ISPF"/>
    <property type="match status" value="1"/>
</dbReference>
<proteinExistence type="inferred from homology"/>
<protein>
    <recommendedName>
        <fullName evidence="1">2-C-methyl-D-erythritol 2,4-cyclodiphosphate synthase</fullName>
        <shortName evidence="1">MECDP-synthase</shortName>
        <shortName evidence="1">MECPP-synthase</shortName>
        <shortName evidence="1">MECPS</shortName>
        <ecNumber evidence="1">4.6.1.12</ecNumber>
    </recommendedName>
</protein>
<keyword id="KW-0414">Isoprene biosynthesis</keyword>
<keyword id="KW-0456">Lyase</keyword>
<keyword id="KW-0479">Metal-binding</keyword>